<evidence type="ECO:0000255" key="1">
    <source>
        <dbReference type="HAMAP-Rule" id="MF_01323"/>
    </source>
</evidence>
<organism>
    <name type="scientific">Aethionema cordifolium</name>
    <name type="common">Lebanon stonecress</name>
    <dbReference type="NCBI Taxonomy" id="434059"/>
    <lineage>
        <taxon>Eukaryota</taxon>
        <taxon>Viridiplantae</taxon>
        <taxon>Streptophyta</taxon>
        <taxon>Embryophyta</taxon>
        <taxon>Tracheophyta</taxon>
        <taxon>Spermatophyta</taxon>
        <taxon>Magnoliopsida</taxon>
        <taxon>eudicotyledons</taxon>
        <taxon>Gunneridae</taxon>
        <taxon>Pentapetalae</taxon>
        <taxon>rosids</taxon>
        <taxon>malvids</taxon>
        <taxon>Brassicales</taxon>
        <taxon>Brassicaceae</taxon>
        <taxon>Aethionemeae</taxon>
        <taxon>Aethionema</taxon>
    </lineage>
</organism>
<comment type="function">
    <text evidence="1">DNA-dependent RNA polymerase catalyzes the transcription of DNA into RNA using the four ribonucleoside triphosphates as substrates.</text>
</comment>
<comment type="catalytic activity">
    <reaction evidence="1">
        <text>RNA(n) + a ribonucleoside 5'-triphosphate = RNA(n+1) + diphosphate</text>
        <dbReference type="Rhea" id="RHEA:21248"/>
        <dbReference type="Rhea" id="RHEA-COMP:14527"/>
        <dbReference type="Rhea" id="RHEA-COMP:17342"/>
        <dbReference type="ChEBI" id="CHEBI:33019"/>
        <dbReference type="ChEBI" id="CHEBI:61557"/>
        <dbReference type="ChEBI" id="CHEBI:140395"/>
        <dbReference type="EC" id="2.7.7.6"/>
    </reaction>
</comment>
<comment type="cofactor">
    <cofactor evidence="1">
        <name>Mg(2+)</name>
        <dbReference type="ChEBI" id="CHEBI:18420"/>
    </cofactor>
    <text evidence="1">Binds 1 Mg(2+) ion per subunit.</text>
</comment>
<comment type="cofactor">
    <cofactor evidence="1">
        <name>Zn(2+)</name>
        <dbReference type="ChEBI" id="CHEBI:29105"/>
    </cofactor>
    <text evidence="1">Binds 1 Zn(2+) ion per subunit.</text>
</comment>
<comment type="subunit">
    <text evidence="1">In plastids the minimal PEP RNA polymerase catalytic core is composed of four subunits: alpha, beta, beta', and beta''. When a (nuclear-encoded) sigma factor is associated with the core the holoenzyme is formed, which can initiate transcription.</text>
</comment>
<comment type="subcellular location">
    <subcellularLocation>
        <location evidence="1">Plastid</location>
        <location evidence="1">Chloroplast</location>
    </subcellularLocation>
</comment>
<comment type="similarity">
    <text evidence="1">Belongs to the RNA polymerase beta' chain family. RpoC1 subfamily.</text>
</comment>
<name>RPOC1_AETCO</name>
<sequence length="680" mass="78491">MIDRYKHQQLRIGSVSPQQISAWATKIIPNGEIVGEVTKPYTFHYKTNKPEKDGLFCERIFGPIKSGICACGNYRVIGDEKEDPKFCEQCGVEFVGSRIRRYQMGYIKLTCPVTHVWYLKRLPSYIANLLDKPLKELEGLVYCDFSFARPITKKPTFLRLRGSFEYEIQSWKYSIPLFFTTQGFDIFRNREISTGAGAIREQLADLDLRIIIENSLVEWKQLGEEGPTGNEWEDRKIVRRKDFLVRRMELAKHFIRTNIEPEWMVLCLLPVLPPELRPIIQIEGGKLMSSDINELYRRVIYRNNTLTDLLTTSRSTPGELVMCQEKLVQEAVDTLLDNGIRGQPMRDGHNKVYKSFSDVIEGKEGRFRETLLGKRVDYSGRSVIVVGPSLSLHRCGLPREIAIELFQTFVIRGLIRQHLASNIGVAKSQIRENKPIVWEILQEVMQGHPVLLNRAPTLHRLGIQSFQPILVEGRTICLHPLVCKGFNADFDGDQMAVHVPLSLEAQAEARLLMFSHMNLLSPAIGDPISVPTQDMLIGLYVLTSGTRRGICANRYNPCNRKNYQNERIYETNYKYMKEPFFCNSYDAIGAYRQKRINLDSPLWLRWQLDQRVSASREVPIEVHYESFGTYHEIYAHYLIVRSIKKETFCVYIRTTVGHISFYREIEEAIQGFSQACSYDT</sequence>
<gene>
    <name evidence="1" type="primary">rpoC1</name>
</gene>
<proteinExistence type="inferred from homology"/>
<accession>A4QJA6</accession>
<protein>
    <recommendedName>
        <fullName evidence="1">DNA-directed RNA polymerase subunit beta'</fullName>
        <ecNumber evidence="1">2.7.7.6</ecNumber>
    </recommendedName>
    <alternativeName>
        <fullName evidence="1">PEP</fullName>
    </alternativeName>
    <alternativeName>
        <fullName evidence="1">Plastid-encoded RNA polymerase subunit beta'</fullName>
        <shortName evidence="1">RNA polymerase subunit beta'</shortName>
    </alternativeName>
</protein>
<feature type="chain" id="PRO_0000353470" description="DNA-directed RNA polymerase subunit beta'">
    <location>
        <begin position="1"/>
        <end position="680"/>
    </location>
</feature>
<feature type="binding site" evidence="1">
    <location>
        <position position="69"/>
    </location>
    <ligand>
        <name>Zn(2+)</name>
        <dbReference type="ChEBI" id="CHEBI:29105"/>
    </ligand>
</feature>
<feature type="binding site" evidence="1">
    <location>
        <position position="71"/>
    </location>
    <ligand>
        <name>Zn(2+)</name>
        <dbReference type="ChEBI" id="CHEBI:29105"/>
    </ligand>
</feature>
<feature type="binding site" evidence="1">
    <location>
        <position position="87"/>
    </location>
    <ligand>
        <name>Zn(2+)</name>
        <dbReference type="ChEBI" id="CHEBI:29105"/>
    </ligand>
</feature>
<feature type="binding site" evidence="1">
    <location>
        <position position="90"/>
    </location>
    <ligand>
        <name>Zn(2+)</name>
        <dbReference type="ChEBI" id="CHEBI:29105"/>
    </ligand>
</feature>
<feature type="binding site" evidence="1">
    <location>
        <position position="489"/>
    </location>
    <ligand>
        <name>Mg(2+)</name>
        <dbReference type="ChEBI" id="CHEBI:18420"/>
    </ligand>
</feature>
<feature type="binding site" evidence="1">
    <location>
        <position position="491"/>
    </location>
    <ligand>
        <name>Mg(2+)</name>
        <dbReference type="ChEBI" id="CHEBI:18420"/>
    </ligand>
</feature>
<feature type="binding site" evidence="1">
    <location>
        <position position="493"/>
    </location>
    <ligand>
        <name>Mg(2+)</name>
        <dbReference type="ChEBI" id="CHEBI:18420"/>
    </ligand>
</feature>
<reference key="1">
    <citation type="submission" date="2007-03" db="EMBL/GenBank/DDBJ databases">
        <title>Sequencing analysis of Aethionema coridifolium chloroplast DNA.</title>
        <authorList>
            <person name="Hosouchi T."/>
            <person name="Tsuruoka H."/>
            <person name="Kotani H."/>
        </authorList>
    </citation>
    <scope>NUCLEOTIDE SEQUENCE [LARGE SCALE GENOMIC DNA]</scope>
</reference>
<geneLocation type="chloroplast"/>
<keyword id="KW-0150">Chloroplast</keyword>
<keyword id="KW-0240">DNA-directed RNA polymerase</keyword>
<keyword id="KW-0460">Magnesium</keyword>
<keyword id="KW-0479">Metal-binding</keyword>
<keyword id="KW-0548">Nucleotidyltransferase</keyword>
<keyword id="KW-0934">Plastid</keyword>
<keyword id="KW-0804">Transcription</keyword>
<keyword id="KW-0808">Transferase</keyword>
<keyword id="KW-0862">Zinc</keyword>
<dbReference type="EC" id="2.7.7.6" evidence="1"/>
<dbReference type="EMBL" id="AP009366">
    <property type="protein sequence ID" value="BAF49761.1"/>
    <property type="molecule type" value="Genomic_DNA"/>
</dbReference>
<dbReference type="RefSeq" id="YP_001122937.1">
    <property type="nucleotide sequence ID" value="NC_009265.1"/>
</dbReference>
<dbReference type="SMR" id="A4QJA6"/>
<dbReference type="GeneID" id="4968639"/>
<dbReference type="GO" id="GO:0009507">
    <property type="term" value="C:chloroplast"/>
    <property type="evidence" value="ECO:0007669"/>
    <property type="project" value="UniProtKB-SubCell"/>
</dbReference>
<dbReference type="GO" id="GO:0000428">
    <property type="term" value="C:DNA-directed RNA polymerase complex"/>
    <property type="evidence" value="ECO:0007669"/>
    <property type="project" value="UniProtKB-KW"/>
</dbReference>
<dbReference type="GO" id="GO:0005739">
    <property type="term" value="C:mitochondrion"/>
    <property type="evidence" value="ECO:0007669"/>
    <property type="project" value="GOC"/>
</dbReference>
<dbReference type="GO" id="GO:0003677">
    <property type="term" value="F:DNA binding"/>
    <property type="evidence" value="ECO:0007669"/>
    <property type="project" value="UniProtKB-UniRule"/>
</dbReference>
<dbReference type="GO" id="GO:0003899">
    <property type="term" value="F:DNA-directed RNA polymerase activity"/>
    <property type="evidence" value="ECO:0007669"/>
    <property type="project" value="UniProtKB-UniRule"/>
</dbReference>
<dbReference type="GO" id="GO:0000287">
    <property type="term" value="F:magnesium ion binding"/>
    <property type="evidence" value="ECO:0007669"/>
    <property type="project" value="UniProtKB-UniRule"/>
</dbReference>
<dbReference type="GO" id="GO:0008270">
    <property type="term" value="F:zinc ion binding"/>
    <property type="evidence" value="ECO:0007669"/>
    <property type="project" value="UniProtKB-UniRule"/>
</dbReference>
<dbReference type="GO" id="GO:0006351">
    <property type="term" value="P:DNA-templated transcription"/>
    <property type="evidence" value="ECO:0007669"/>
    <property type="project" value="UniProtKB-UniRule"/>
</dbReference>
<dbReference type="FunFam" id="4.10.860.120:FF:000007">
    <property type="entry name" value="DNA-directed RNA polymerase subunit gamma"/>
    <property type="match status" value="1"/>
</dbReference>
<dbReference type="Gene3D" id="1.10.40.90">
    <property type="match status" value="1"/>
</dbReference>
<dbReference type="Gene3D" id="2.40.40.20">
    <property type="match status" value="1"/>
</dbReference>
<dbReference type="Gene3D" id="4.10.860.120">
    <property type="entry name" value="RNA polymerase II, clamp domain"/>
    <property type="match status" value="1"/>
</dbReference>
<dbReference type="Gene3D" id="1.10.274.100">
    <property type="entry name" value="RNA polymerase Rpb1, domain 3"/>
    <property type="match status" value="1"/>
</dbReference>
<dbReference type="HAMAP" id="MF_01323">
    <property type="entry name" value="RNApol_bact_RpoC1"/>
    <property type="match status" value="1"/>
</dbReference>
<dbReference type="InterPro" id="IPR045867">
    <property type="entry name" value="DNA-dir_RpoC_beta_prime"/>
</dbReference>
<dbReference type="InterPro" id="IPR000722">
    <property type="entry name" value="RNA_pol_asu"/>
</dbReference>
<dbReference type="InterPro" id="IPR006592">
    <property type="entry name" value="RNA_pol_N"/>
</dbReference>
<dbReference type="InterPro" id="IPR007080">
    <property type="entry name" value="RNA_pol_Rpb1_1"/>
</dbReference>
<dbReference type="InterPro" id="IPR042102">
    <property type="entry name" value="RNA_pol_Rpb1_3_sf"/>
</dbReference>
<dbReference type="InterPro" id="IPR044893">
    <property type="entry name" value="RNA_pol_Rpb1_clamp_domain"/>
</dbReference>
<dbReference type="InterPro" id="IPR034678">
    <property type="entry name" value="RNApol_RpoC1"/>
</dbReference>
<dbReference type="PANTHER" id="PTHR19376">
    <property type="entry name" value="DNA-DIRECTED RNA POLYMERASE"/>
    <property type="match status" value="1"/>
</dbReference>
<dbReference type="PANTHER" id="PTHR19376:SF54">
    <property type="entry name" value="DNA-DIRECTED RNA POLYMERASE SUBUNIT BETA"/>
    <property type="match status" value="1"/>
</dbReference>
<dbReference type="Pfam" id="PF04997">
    <property type="entry name" value="RNA_pol_Rpb1_1"/>
    <property type="match status" value="1"/>
</dbReference>
<dbReference type="Pfam" id="PF00623">
    <property type="entry name" value="RNA_pol_Rpb1_2"/>
    <property type="match status" value="2"/>
</dbReference>
<dbReference type="SMART" id="SM00663">
    <property type="entry name" value="RPOLA_N"/>
    <property type="match status" value="1"/>
</dbReference>
<dbReference type="SUPFAM" id="SSF64484">
    <property type="entry name" value="beta and beta-prime subunits of DNA dependent RNA-polymerase"/>
    <property type="match status" value="1"/>
</dbReference>